<reference key="1">
    <citation type="journal article" date="2007" name="Genome Res.">
        <title>Genome characteristics of facultatively symbiotic Frankia sp. strains reflect host range and host plant biogeography.</title>
        <authorList>
            <person name="Normand P."/>
            <person name="Lapierre P."/>
            <person name="Tisa L.S."/>
            <person name="Gogarten J.P."/>
            <person name="Alloisio N."/>
            <person name="Bagnarol E."/>
            <person name="Bassi C.A."/>
            <person name="Berry A.M."/>
            <person name="Bickhart D.M."/>
            <person name="Choisne N."/>
            <person name="Couloux A."/>
            <person name="Cournoyer B."/>
            <person name="Cruveiller S."/>
            <person name="Daubin V."/>
            <person name="Demange N."/>
            <person name="Francino M.P."/>
            <person name="Goltsman E."/>
            <person name="Huang Y."/>
            <person name="Kopp O.R."/>
            <person name="Labarre L."/>
            <person name="Lapidus A."/>
            <person name="Lavire C."/>
            <person name="Marechal J."/>
            <person name="Martinez M."/>
            <person name="Mastronunzio J.E."/>
            <person name="Mullin B.C."/>
            <person name="Niemann J."/>
            <person name="Pujic P."/>
            <person name="Rawnsley T."/>
            <person name="Rouy Z."/>
            <person name="Schenowitz C."/>
            <person name="Sellstedt A."/>
            <person name="Tavares F."/>
            <person name="Tomkins J.P."/>
            <person name="Vallenet D."/>
            <person name="Valverde C."/>
            <person name="Wall L.G."/>
            <person name="Wang Y."/>
            <person name="Medigue C."/>
            <person name="Benson D.R."/>
        </authorList>
    </citation>
    <scope>NUCLEOTIDE SEQUENCE [LARGE SCALE GENOMIC DNA]</scope>
    <source>
        <strain>DSM 45986 / CECT 9034 / ACN14a</strain>
    </source>
</reference>
<keyword id="KW-1185">Reference proteome</keyword>
<keyword id="KW-0687">Ribonucleoprotein</keyword>
<keyword id="KW-0689">Ribosomal protein</keyword>
<keyword id="KW-0694">RNA-binding</keyword>
<keyword id="KW-0699">rRNA-binding</keyword>
<name>RS8_FRAAA</name>
<protein>
    <recommendedName>
        <fullName evidence="1">Small ribosomal subunit protein uS8</fullName>
    </recommendedName>
    <alternativeName>
        <fullName evidence="2">30S ribosomal protein S8</fullName>
    </alternativeName>
</protein>
<dbReference type="EMBL" id="CT573213">
    <property type="protein sequence ID" value="CAJ59760.1"/>
    <property type="status" value="ALT_INIT"/>
    <property type="molecule type" value="Genomic_DNA"/>
</dbReference>
<dbReference type="RefSeq" id="WP_041938849.1">
    <property type="nucleotide sequence ID" value="NC_008278.1"/>
</dbReference>
<dbReference type="SMR" id="Q0RRQ7"/>
<dbReference type="STRING" id="326424.FRAAL1095"/>
<dbReference type="KEGG" id="fal:FRAAL1095"/>
<dbReference type="eggNOG" id="COG0096">
    <property type="taxonomic scope" value="Bacteria"/>
</dbReference>
<dbReference type="HOGENOM" id="CLU_098428_0_1_11"/>
<dbReference type="OrthoDB" id="9802617at2"/>
<dbReference type="Proteomes" id="UP000000657">
    <property type="component" value="Chromosome"/>
</dbReference>
<dbReference type="GO" id="GO:1990904">
    <property type="term" value="C:ribonucleoprotein complex"/>
    <property type="evidence" value="ECO:0007669"/>
    <property type="project" value="UniProtKB-KW"/>
</dbReference>
<dbReference type="GO" id="GO:0005840">
    <property type="term" value="C:ribosome"/>
    <property type="evidence" value="ECO:0007669"/>
    <property type="project" value="UniProtKB-KW"/>
</dbReference>
<dbReference type="GO" id="GO:0019843">
    <property type="term" value="F:rRNA binding"/>
    <property type="evidence" value="ECO:0007669"/>
    <property type="project" value="UniProtKB-UniRule"/>
</dbReference>
<dbReference type="GO" id="GO:0003735">
    <property type="term" value="F:structural constituent of ribosome"/>
    <property type="evidence" value="ECO:0007669"/>
    <property type="project" value="InterPro"/>
</dbReference>
<dbReference type="GO" id="GO:0006412">
    <property type="term" value="P:translation"/>
    <property type="evidence" value="ECO:0007669"/>
    <property type="project" value="UniProtKB-UniRule"/>
</dbReference>
<dbReference type="FunFam" id="3.30.1370.30:FF:000002">
    <property type="entry name" value="30S ribosomal protein S8"/>
    <property type="match status" value="1"/>
</dbReference>
<dbReference type="FunFam" id="3.30.1490.10:FF:000001">
    <property type="entry name" value="30S ribosomal protein S8"/>
    <property type="match status" value="1"/>
</dbReference>
<dbReference type="Gene3D" id="3.30.1370.30">
    <property type="match status" value="1"/>
</dbReference>
<dbReference type="Gene3D" id="3.30.1490.10">
    <property type="match status" value="1"/>
</dbReference>
<dbReference type="HAMAP" id="MF_01302_B">
    <property type="entry name" value="Ribosomal_uS8_B"/>
    <property type="match status" value="1"/>
</dbReference>
<dbReference type="InterPro" id="IPR000630">
    <property type="entry name" value="Ribosomal_uS8"/>
</dbReference>
<dbReference type="InterPro" id="IPR035987">
    <property type="entry name" value="Ribosomal_uS8_sf"/>
</dbReference>
<dbReference type="NCBIfam" id="NF001109">
    <property type="entry name" value="PRK00136.1"/>
    <property type="match status" value="1"/>
</dbReference>
<dbReference type="PANTHER" id="PTHR11758">
    <property type="entry name" value="40S RIBOSOMAL PROTEIN S15A"/>
    <property type="match status" value="1"/>
</dbReference>
<dbReference type="Pfam" id="PF00410">
    <property type="entry name" value="Ribosomal_S8"/>
    <property type="match status" value="1"/>
</dbReference>
<dbReference type="SUPFAM" id="SSF56047">
    <property type="entry name" value="Ribosomal protein S8"/>
    <property type="match status" value="1"/>
</dbReference>
<organism>
    <name type="scientific">Frankia alni (strain DSM 45986 / CECT 9034 / ACN14a)</name>
    <dbReference type="NCBI Taxonomy" id="326424"/>
    <lineage>
        <taxon>Bacteria</taxon>
        <taxon>Bacillati</taxon>
        <taxon>Actinomycetota</taxon>
        <taxon>Actinomycetes</taxon>
        <taxon>Frankiales</taxon>
        <taxon>Frankiaceae</taxon>
        <taxon>Frankia</taxon>
    </lineage>
</organism>
<accession>Q0RRQ7</accession>
<sequence>MTMTDPIADMLTRVRNASRAYHDSVVMPHSKIKTHIAEILQQEGYISSWHVDDATLAGGVGHTLVIDLKYGPNRERSIAGIKRISKPGLRVYAKATNLPKVLGGLGVAIISTSSGLLTDKQAGKRGVGGEVLAYVW</sequence>
<proteinExistence type="inferred from homology"/>
<comment type="function">
    <text evidence="1">One of the primary rRNA binding proteins, it binds directly to 16S rRNA central domain where it helps coordinate assembly of the platform of the 30S subunit.</text>
</comment>
<comment type="subunit">
    <text evidence="1">Part of the 30S ribosomal subunit. Contacts proteins S5 and S12.</text>
</comment>
<comment type="similarity">
    <text evidence="1">Belongs to the universal ribosomal protein uS8 family.</text>
</comment>
<comment type="sequence caution" evidence="2">
    <conflict type="erroneous initiation">
        <sequence resource="EMBL-CDS" id="CAJ59760"/>
    </conflict>
</comment>
<evidence type="ECO:0000255" key="1">
    <source>
        <dbReference type="HAMAP-Rule" id="MF_01302"/>
    </source>
</evidence>
<evidence type="ECO:0000305" key="2"/>
<feature type="chain" id="PRO_0000290843" description="Small ribosomal subunit protein uS8">
    <location>
        <begin position="1"/>
        <end position="136"/>
    </location>
</feature>
<gene>
    <name evidence="1" type="primary">rpsH</name>
    <name type="ordered locus">FRAAL1095</name>
</gene>